<feature type="chain" id="PRO_0000195136" description="Dynein axonemal light chain 4">
    <location>
        <begin position="1"/>
        <end position="105"/>
    </location>
</feature>
<feature type="sequence variant" id="VAR_089743" description="In MRMV3; uncertain significance." evidence="3">
    <original>T</original>
    <variation>I</variation>
    <location>
        <position position="35"/>
    </location>
</feature>
<feature type="sequence conflict" description="In Ref. 6; CAG46992." evidence="4" ref="6">
    <original>K</original>
    <variation>N</variation>
    <location>
        <position position="58"/>
    </location>
</feature>
<comment type="function">
    <text evidence="1">Force generating protein of respiratory cilia. Produces force towards the minus ends of microtubules. Dynein has ATPase activity (By similarity).</text>
</comment>
<comment type="subunit">
    <text>Consists of at least two heavy chains and a number of intermediate and light chains.</text>
</comment>
<comment type="interaction">
    <interactant intactId="EBI-742362">
        <id>O96015</id>
    </interactant>
    <interactant intactId="EBI-351018">
        <id>Q13557</id>
        <label>CAMK2D</label>
    </interactant>
    <organismsDiffer>false</organismsDiffer>
    <experiments>5</experiments>
</comment>
<comment type="interaction">
    <interactant intactId="EBI-742362">
        <id>O96015</id>
    </interactant>
    <interactant intactId="EBI-741528">
        <id>Q9UKJ5</id>
        <label>CHIC2</label>
    </interactant>
    <organismsDiffer>false</organismsDiffer>
    <experiments>3</experiments>
</comment>
<comment type="interaction">
    <interactant intactId="EBI-742362">
        <id>O96015</id>
    </interactant>
    <interactant intactId="EBI-742362">
        <id>O96015</id>
        <label>DNAL4</label>
    </interactant>
    <organismsDiffer>false</organismsDiffer>
    <experiments>3</experiments>
</comment>
<comment type="interaction">
    <interactant intactId="EBI-742362">
        <id>O96015</id>
    </interactant>
    <interactant intactId="EBI-349105">
        <id>P63167</id>
        <label>DYNLL1</label>
    </interactant>
    <organismsDiffer>false</organismsDiffer>
    <experiments>5</experiments>
</comment>
<comment type="interaction">
    <interactant intactId="EBI-742362">
        <id>O96015</id>
    </interactant>
    <interactant intactId="EBI-742371">
        <id>Q96FJ2</id>
        <label>DYNLL2</label>
    </interactant>
    <organismsDiffer>false</organismsDiffer>
    <experiments>8</experiments>
</comment>
<comment type="interaction">
    <interactant intactId="EBI-742362">
        <id>O96015</id>
    </interactant>
    <interactant intactId="EBI-750641">
        <id>Q5TD97</id>
        <label>FHL5</label>
    </interactant>
    <organismsDiffer>false</organismsDiffer>
    <experiments>10</experiments>
</comment>
<comment type="interaction">
    <interactant intactId="EBI-742362">
        <id>O96015</id>
    </interactant>
    <interactant intactId="EBI-7951023">
        <id>O95837</id>
        <label>GNA14</label>
    </interactant>
    <organismsDiffer>false</organismsDiffer>
    <experiments>3</experiments>
</comment>
<comment type="interaction">
    <interactant intactId="EBI-742362">
        <id>O96015</id>
    </interactant>
    <interactant intactId="EBI-11953334">
        <id>P60328</id>
        <label>KRTAP12-3</label>
    </interactant>
    <organismsDiffer>false</organismsDiffer>
    <experiments>3</experiments>
</comment>
<comment type="interaction">
    <interactant intactId="EBI-742362">
        <id>O96015</id>
    </interactant>
    <interactant intactId="EBI-11958364">
        <id>Q9BYQ0</id>
        <label>KRTAP9-8</label>
    </interactant>
    <organismsDiffer>false</organismsDiffer>
    <experiments>3</experiments>
</comment>
<comment type="interaction">
    <interactant intactId="EBI-742362">
        <id>O96015</id>
    </interactant>
    <interactant intactId="EBI-12305293">
        <id>Q8NCF5-2</id>
        <label>NFATC2IP</label>
    </interactant>
    <organismsDiffer>false</organismsDiffer>
    <experiments>6</experiments>
</comment>
<comment type="interaction">
    <interactant intactId="EBI-742362">
        <id>O96015</id>
    </interactant>
    <interactant intactId="EBI-945833">
        <id>Q7Z3S9</id>
        <label>NOTCH2NLA</label>
    </interactant>
    <organismsDiffer>false</organismsDiffer>
    <experiments>3</experiments>
</comment>
<comment type="interaction">
    <interactant intactId="EBI-742362">
        <id>O96015</id>
    </interactant>
    <interactant intactId="EBI-741158">
        <id>Q96HA8</id>
        <label>NTAQ1</label>
    </interactant>
    <organismsDiffer>false</organismsDiffer>
    <experiments>3</experiments>
</comment>
<comment type="interaction">
    <interactant intactId="EBI-742362">
        <id>O96015</id>
    </interactant>
    <interactant intactId="EBI-10297093">
        <id>Q9BRQ3</id>
        <label>NUDT22</label>
    </interactant>
    <organismsDiffer>false</organismsDiffer>
    <experiments>7</experiments>
</comment>
<comment type="interaction">
    <interactant intactId="EBI-742362">
        <id>O96015</id>
    </interactant>
    <interactant intactId="EBI-2130429">
        <id>Q9BYV2</id>
        <label>TRIM54</label>
    </interactant>
    <organismsDiffer>false</organismsDiffer>
    <experiments>3</experiments>
</comment>
<comment type="subcellular location">
    <subcellularLocation>
        <location evidence="1">Cytoplasm</location>
        <location evidence="1">Cytoskeleton</location>
        <location evidence="1">Cilium axoneme</location>
    </subcellularLocation>
</comment>
<comment type="disease" evidence="2 3">
    <disease id="DI-04270">
        <name>Mirror movements 3</name>
        <acronym>MRMV3</acronym>
        <description>A disorder characterized by contralateral involuntary movements that mirror voluntary ones. While mirror movements are occasionally found in young children, persistence beyond the age of 10 is abnormal. Mirror movements occur more commonly in the upper extremities.</description>
        <dbReference type="MIM" id="616059"/>
    </disease>
    <text>The disease is caused by variants affecting the gene represented in this entry.</text>
</comment>
<comment type="similarity">
    <text evidence="4">Belongs to the dynein light chain family.</text>
</comment>
<keyword id="KW-0966">Cell projection</keyword>
<keyword id="KW-0969">Cilium</keyword>
<keyword id="KW-0963">Cytoplasm</keyword>
<keyword id="KW-0206">Cytoskeleton</keyword>
<keyword id="KW-0243">Dynein</keyword>
<keyword id="KW-0493">Microtubule</keyword>
<keyword id="KW-0505">Motor protein</keyword>
<keyword id="KW-1267">Proteomics identification</keyword>
<keyword id="KW-1185">Reference proteome</keyword>
<protein>
    <recommendedName>
        <fullName>Dynein axonemal light chain 4</fullName>
    </recommendedName>
</protein>
<accession>O96015</accession>
<accession>Q6FGB2</accession>
<accession>Q6FGD0</accession>
<dbReference type="EMBL" id="AL035366">
    <property type="protein sequence ID" value="CAA23018.1"/>
    <property type="molecule type" value="mRNA"/>
</dbReference>
<dbReference type="EMBL" id="BT009847">
    <property type="protein sequence ID" value="AAP88849.1"/>
    <property type="molecule type" value="mRNA"/>
</dbReference>
<dbReference type="EMBL" id="AY453399">
    <property type="protein sequence ID" value="AAS47516.1"/>
    <property type="molecule type" value="mRNA"/>
</dbReference>
<dbReference type="EMBL" id="CR456487">
    <property type="protein sequence ID" value="CAG30373.1"/>
    <property type="molecule type" value="mRNA"/>
</dbReference>
<dbReference type="EMBL" id="AK290566">
    <property type="protein sequence ID" value="BAF83255.1"/>
    <property type="molecule type" value="mRNA"/>
</dbReference>
<dbReference type="EMBL" id="CR542177">
    <property type="protein sequence ID" value="CAG46974.1"/>
    <property type="molecule type" value="mRNA"/>
</dbReference>
<dbReference type="EMBL" id="CR542195">
    <property type="protein sequence ID" value="CAG46992.1"/>
    <property type="molecule type" value="mRNA"/>
</dbReference>
<dbReference type="EMBL" id="AL008583">
    <property type="status" value="NOT_ANNOTATED_CDS"/>
    <property type="molecule type" value="Genomic_DNA"/>
</dbReference>
<dbReference type="EMBL" id="CH471095">
    <property type="protein sequence ID" value="EAW60272.1"/>
    <property type="molecule type" value="Genomic_DNA"/>
</dbReference>
<dbReference type="EMBL" id="BC002968">
    <property type="protein sequence ID" value="AAH02968.1"/>
    <property type="molecule type" value="mRNA"/>
</dbReference>
<dbReference type="CCDS" id="CCDS13979.1"/>
<dbReference type="RefSeq" id="NP_005731.1">
    <property type="nucleotide sequence ID" value="NM_005740.3"/>
</dbReference>
<dbReference type="SMR" id="O96015"/>
<dbReference type="BioGRID" id="115430">
    <property type="interactions" value="41"/>
</dbReference>
<dbReference type="FunCoup" id="O96015">
    <property type="interactions" value="384"/>
</dbReference>
<dbReference type="IntAct" id="O96015">
    <property type="interactions" value="35"/>
</dbReference>
<dbReference type="MINT" id="O96015"/>
<dbReference type="STRING" id="9606.ENSP00000216068"/>
<dbReference type="iPTMnet" id="O96015"/>
<dbReference type="PhosphoSitePlus" id="O96015"/>
<dbReference type="BioMuta" id="DNAL4"/>
<dbReference type="jPOST" id="O96015"/>
<dbReference type="MassIVE" id="O96015"/>
<dbReference type="PaxDb" id="9606-ENSP00000216068"/>
<dbReference type="PeptideAtlas" id="O96015"/>
<dbReference type="ProteomicsDB" id="51197"/>
<dbReference type="Pumba" id="O96015"/>
<dbReference type="Antibodypedia" id="329">
    <property type="antibodies" value="267 antibodies from 29 providers"/>
</dbReference>
<dbReference type="DNASU" id="10126"/>
<dbReference type="Ensembl" id="ENST00000216068.9">
    <property type="protein sequence ID" value="ENSP00000216068.4"/>
    <property type="gene ID" value="ENSG00000100246.13"/>
</dbReference>
<dbReference type="GeneID" id="10126"/>
<dbReference type="KEGG" id="hsa:10126"/>
<dbReference type="MANE-Select" id="ENST00000216068.9">
    <property type="protein sequence ID" value="ENSP00000216068.4"/>
    <property type="RefSeq nucleotide sequence ID" value="NM_005740.3"/>
    <property type="RefSeq protein sequence ID" value="NP_005731.1"/>
</dbReference>
<dbReference type="UCSC" id="uc003awj.4">
    <property type="organism name" value="human"/>
</dbReference>
<dbReference type="AGR" id="HGNC:2955"/>
<dbReference type="CTD" id="10126"/>
<dbReference type="DisGeNET" id="10126"/>
<dbReference type="GeneCards" id="DNAL4"/>
<dbReference type="HGNC" id="HGNC:2955">
    <property type="gene designation" value="DNAL4"/>
</dbReference>
<dbReference type="HPA" id="ENSG00000100246">
    <property type="expression patterns" value="Low tissue specificity"/>
</dbReference>
<dbReference type="MalaCards" id="DNAL4"/>
<dbReference type="MIM" id="610565">
    <property type="type" value="gene"/>
</dbReference>
<dbReference type="MIM" id="616059">
    <property type="type" value="phenotype"/>
</dbReference>
<dbReference type="neXtProt" id="NX_O96015"/>
<dbReference type="OpenTargets" id="ENSG00000100246"/>
<dbReference type="Orphanet" id="238722">
    <property type="disease" value="Familial congenital mirror movements"/>
</dbReference>
<dbReference type="PharmGKB" id="PA27426"/>
<dbReference type="VEuPathDB" id="HostDB:ENSG00000100246"/>
<dbReference type="eggNOG" id="KOG3430">
    <property type="taxonomic scope" value="Eukaryota"/>
</dbReference>
<dbReference type="GeneTree" id="ENSGT00940000161265"/>
<dbReference type="HOGENOM" id="CLU_070944_3_0_1"/>
<dbReference type="InParanoid" id="O96015"/>
<dbReference type="OMA" id="CDMTDEM"/>
<dbReference type="OrthoDB" id="6506078at2759"/>
<dbReference type="PAN-GO" id="O96015">
    <property type="GO annotations" value="0 GO annotations based on evolutionary models"/>
</dbReference>
<dbReference type="PhylomeDB" id="O96015"/>
<dbReference type="TreeFam" id="TF324136"/>
<dbReference type="PathwayCommons" id="O96015"/>
<dbReference type="Reactome" id="R-HSA-177504">
    <property type="pathway name" value="Retrograde neurotrophin signalling"/>
</dbReference>
<dbReference type="SignaLink" id="O96015"/>
<dbReference type="BioGRID-ORCS" id="10126">
    <property type="hits" value="11 hits in 1162 CRISPR screens"/>
</dbReference>
<dbReference type="ChiTaRS" id="DNAL4">
    <property type="organism name" value="human"/>
</dbReference>
<dbReference type="GeneWiki" id="DNAL4"/>
<dbReference type="GenomeRNAi" id="10126"/>
<dbReference type="Pharos" id="O96015">
    <property type="development level" value="Tbio"/>
</dbReference>
<dbReference type="PRO" id="PR:O96015"/>
<dbReference type="Proteomes" id="UP000005640">
    <property type="component" value="Chromosome 22"/>
</dbReference>
<dbReference type="RNAct" id="O96015">
    <property type="molecule type" value="protein"/>
</dbReference>
<dbReference type="Bgee" id="ENSG00000100246">
    <property type="expression patterns" value="Expressed in left testis and 131 other cell types or tissues"/>
</dbReference>
<dbReference type="ExpressionAtlas" id="O96015">
    <property type="expression patterns" value="baseline and differential"/>
</dbReference>
<dbReference type="GO" id="GO:0005929">
    <property type="term" value="C:cilium"/>
    <property type="evidence" value="ECO:0007669"/>
    <property type="project" value="UniProtKB-KW"/>
</dbReference>
<dbReference type="GO" id="GO:0005737">
    <property type="term" value="C:cytoplasm"/>
    <property type="evidence" value="ECO:0007669"/>
    <property type="project" value="UniProtKB-KW"/>
</dbReference>
<dbReference type="GO" id="GO:0030286">
    <property type="term" value="C:dynein complex"/>
    <property type="evidence" value="ECO:0007669"/>
    <property type="project" value="UniProtKB-KW"/>
</dbReference>
<dbReference type="GO" id="GO:0005874">
    <property type="term" value="C:microtubule"/>
    <property type="evidence" value="ECO:0007669"/>
    <property type="project" value="UniProtKB-KW"/>
</dbReference>
<dbReference type="GO" id="GO:0005886">
    <property type="term" value="C:plasma membrane"/>
    <property type="evidence" value="ECO:0000304"/>
    <property type="project" value="Reactome"/>
</dbReference>
<dbReference type="GO" id="GO:0042802">
    <property type="term" value="F:identical protein binding"/>
    <property type="evidence" value="ECO:0000353"/>
    <property type="project" value="IntAct"/>
</dbReference>
<dbReference type="GO" id="GO:0003777">
    <property type="term" value="F:microtubule motor activity"/>
    <property type="evidence" value="ECO:0000304"/>
    <property type="project" value="Reactome"/>
</dbReference>
<dbReference type="GO" id="GO:0007018">
    <property type="term" value="P:microtubule-based movement"/>
    <property type="evidence" value="ECO:0000304"/>
    <property type="project" value="Reactome"/>
</dbReference>
<dbReference type="CDD" id="cd21453">
    <property type="entry name" value="DLC-like_DNAL4"/>
    <property type="match status" value="1"/>
</dbReference>
<dbReference type="FunFam" id="3.30.740.10:FF:000002">
    <property type="entry name" value="Dynein light chain"/>
    <property type="match status" value="1"/>
</dbReference>
<dbReference type="Gene3D" id="3.30.740.10">
    <property type="entry name" value="Protein Inhibitor Of Neuronal Nitric Oxide Synthase"/>
    <property type="match status" value="1"/>
</dbReference>
<dbReference type="InterPro" id="IPR037177">
    <property type="entry name" value="DLC_sf"/>
</dbReference>
<dbReference type="InterPro" id="IPR001372">
    <property type="entry name" value="Dynein_light_chain_typ-1/2"/>
</dbReference>
<dbReference type="PANTHER" id="PTHR11886:SF2">
    <property type="entry name" value="DYNEIN AXONEMAL LIGHT CHAIN 4"/>
    <property type="match status" value="1"/>
</dbReference>
<dbReference type="PANTHER" id="PTHR11886">
    <property type="entry name" value="DYNEIN LIGHT CHAIN"/>
    <property type="match status" value="1"/>
</dbReference>
<dbReference type="Pfam" id="PF01221">
    <property type="entry name" value="Dynein_light"/>
    <property type="match status" value="1"/>
</dbReference>
<dbReference type="SMART" id="SM01375">
    <property type="entry name" value="Dynein_light"/>
    <property type="match status" value="1"/>
</dbReference>
<dbReference type="SUPFAM" id="SSF54648">
    <property type="entry name" value="DLC"/>
    <property type="match status" value="1"/>
</dbReference>
<reference key="1">
    <citation type="journal article" date="2003" name="Genome Res.">
        <title>Reevaluating human gene annotation: a second-generation analysis of chromosome 22.</title>
        <authorList>
            <person name="Collins J.E."/>
            <person name="Goward M.E."/>
            <person name="Cole C.G."/>
            <person name="Smink L.J."/>
            <person name="Huckle E.J."/>
            <person name="Knowles S."/>
            <person name="Bye J.M."/>
            <person name="Beare D.M."/>
            <person name="Dunham I."/>
        </authorList>
    </citation>
    <scope>NUCLEOTIDE SEQUENCE [LARGE SCALE MRNA]</scope>
    <source>
        <tissue>Testis</tissue>
    </source>
</reference>
<reference key="2">
    <citation type="submission" date="2003-08" db="EMBL/GenBank/DDBJ databases">
        <title>Cloning of human full-length CDSs in BD Creator(TM) system donor vector.</title>
        <authorList>
            <person name="Kalnine N."/>
            <person name="Chen X."/>
            <person name="Rolfs A."/>
            <person name="Halleck A."/>
            <person name="Hines L."/>
            <person name="Eisenstein S."/>
            <person name="Koundinya M."/>
            <person name="Raphael J."/>
            <person name="Moreira D."/>
            <person name="Kelley T."/>
            <person name="LaBaer J."/>
            <person name="Lin Y."/>
            <person name="Phelan M."/>
            <person name="Farmer A."/>
        </authorList>
    </citation>
    <scope>NUCLEOTIDE SEQUENCE [LARGE SCALE MRNA]</scope>
</reference>
<reference key="3">
    <citation type="submission" date="2003-10" db="EMBL/GenBank/DDBJ databases">
        <title>Identification of a human proliferation inducing gene.</title>
        <authorList>
            <person name="Kim J.W."/>
        </authorList>
    </citation>
    <scope>NUCLEOTIDE SEQUENCE [LARGE SCALE MRNA]</scope>
</reference>
<reference key="4">
    <citation type="journal article" date="2004" name="Genome Biol.">
        <title>A genome annotation-driven approach to cloning the human ORFeome.</title>
        <authorList>
            <person name="Collins J.E."/>
            <person name="Wright C.L."/>
            <person name="Edwards C.A."/>
            <person name="Davis M.P."/>
            <person name="Grinham J.A."/>
            <person name="Cole C.G."/>
            <person name="Goward M.E."/>
            <person name="Aguado B."/>
            <person name="Mallya M."/>
            <person name="Mokrab Y."/>
            <person name="Huckle E.J."/>
            <person name="Beare D.M."/>
            <person name="Dunham I."/>
        </authorList>
    </citation>
    <scope>NUCLEOTIDE SEQUENCE [LARGE SCALE MRNA]</scope>
</reference>
<reference key="5">
    <citation type="journal article" date="2004" name="Nat. Genet.">
        <title>Complete sequencing and characterization of 21,243 full-length human cDNAs.</title>
        <authorList>
            <person name="Ota T."/>
            <person name="Suzuki Y."/>
            <person name="Nishikawa T."/>
            <person name="Otsuki T."/>
            <person name="Sugiyama T."/>
            <person name="Irie R."/>
            <person name="Wakamatsu A."/>
            <person name="Hayashi K."/>
            <person name="Sato H."/>
            <person name="Nagai K."/>
            <person name="Kimura K."/>
            <person name="Makita H."/>
            <person name="Sekine M."/>
            <person name="Obayashi M."/>
            <person name="Nishi T."/>
            <person name="Shibahara T."/>
            <person name="Tanaka T."/>
            <person name="Ishii S."/>
            <person name="Yamamoto J."/>
            <person name="Saito K."/>
            <person name="Kawai Y."/>
            <person name="Isono Y."/>
            <person name="Nakamura Y."/>
            <person name="Nagahari K."/>
            <person name="Murakami K."/>
            <person name="Yasuda T."/>
            <person name="Iwayanagi T."/>
            <person name="Wagatsuma M."/>
            <person name="Shiratori A."/>
            <person name="Sudo H."/>
            <person name="Hosoiri T."/>
            <person name="Kaku Y."/>
            <person name="Kodaira H."/>
            <person name="Kondo H."/>
            <person name="Sugawara M."/>
            <person name="Takahashi M."/>
            <person name="Kanda K."/>
            <person name="Yokoi T."/>
            <person name="Furuya T."/>
            <person name="Kikkawa E."/>
            <person name="Omura Y."/>
            <person name="Abe K."/>
            <person name="Kamihara K."/>
            <person name="Katsuta N."/>
            <person name="Sato K."/>
            <person name="Tanikawa M."/>
            <person name="Yamazaki M."/>
            <person name="Ninomiya K."/>
            <person name="Ishibashi T."/>
            <person name="Yamashita H."/>
            <person name="Murakawa K."/>
            <person name="Fujimori K."/>
            <person name="Tanai H."/>
            <person name="Kimata M."/>
            <person name="Watanabe M."/>
            <person name="Hiraoka S."/>
            <person name="Chiba Y."/>
            <person name="Ishida S."/>
            <person name="Ono Y."/>
            <person name="Takiguchi S."/>
            <person name="Watanabe S."/>
            <person name="Yosida M."/>
            <person name="Hotuta T."/>
            <person name="Kusano J."/>
            <person name="Kanehori K."/>
            <person name="Takahashi-Fujii A."/>
            <person name="Hara H."/>
            <person name="Tanase T.-O."/>
            <person name="Nomura Y."/>
            <person name="Togiya S."/>
            <person name="Komai F."/>
            <person name="Hara R."/>
            <person name="Takeuchi K."/>
            <person name="Arita M."/>
            <person name="Imose N."/>
            <person name="Musashino K."/>
            <person name="Yuuki H."/>
            <person name="Oshima A."/>
            <person name="Sasaki N."/>
            <person name="Aotsuka S."/>
            <person name="Yoshikawa Y."/>
            <person name="Matsunawa H."/>
            <person name="Ichihara T."/>
            <person name="Shiohata N."/>
            <person name="Sano S."/>
            <person name="Moriya S."/>
            <person name="Momiyama H."/>
            <person name="Satoh N."/>
            <person name="Takami S."/>
            <person name="Terashima Y."/>
            <person name="Suzuki O."/>
            <person name="Nakagawa S."/>
            <person name="Senoh A."/>
            <person name="Mizoguchi H."/>
            <person name="Goto Y."/>
            <person name="Shimizu F."/>
            <person name="Wakebe H."/>
            <person name="Hishigaki H."/>
            <person name="Watanabe T."/>
            <person name="Sugiyama A."/>
            <person name="Takemoto M."/>
            <person name="Kawakami B."/>
            <person name="Yamazaki M."/>
            <person name="Watanabe K."/>
            <person name="Kumagai A."/>
            <person name="Itakura S."/>
            <person name="Fukuzumi Y."/>
            <person name="Fujimori Y."/>
            <person name="Komiyama M."/>
            <person name="Tashiro H."/>
            <person name="Tanigami A."/>
            <person name="Fujiwara T."/>
            <person name="Ono T."/>
            <person name="Yamada K."/>
            <person name="Fujii Y."/>
            <person name="Ozaki K."/>
            <person name="Hirao M."/>
            <person name="Ohmori Y."/>
            <person name="Kawabata A."/>
            <person name="Hikiji T."/>
            <person name="Kobatake N."/>
            <person name="Inagaki H."/>
            <person name="Ikema Y."/>
            <person name="Okamoto S."/>
            <person name="Okitani R."/>
            <person name="Kawakami T."/>
            <person name="Noguchi S."/>
            <person name="Itoh T."/>
            <person name="Shigeta K."/>
            <person name="Senba T."/>
            <person name="Matsumura K."/>
            <person name="Nakajima Y."/>
            <person name="Mizuno T."/>
            <person name="Morinaga M."/>
            <person name="Sasaki M."/>
            <person name="Togashi T."/>
            <person name="Oyama M."/>
            <person name="Hata H."/>
            <person name="Watanabe M."/>
            <person name="Komatsu T."/>
            <person name="Mizushima-Sugano J."/>
            <person name="Satoh T."/>
            <person name="Shirai Y."/>
            <person name="Takahashi Y."/>
            <person name="Nakagawa K."/>
            <person name="Okumura K."/>
            <person name="Nagase T."/>
            <person name="Nomura N."/>
            <person name="Kikuchi H."/>
            <person name="Masuho Y."/>
            <person name="Yamashita R."/>
            <person name="Nakai K."/>
            <person name="Yada T."/>
            <person name="Nakamura Y."/>
            <person name="Ohara O."/>
            <person name="Isogai T."/>
            <person name="Sugano S."/>
        </authorList>
    </citation>
    <scope>NUCLEOTIDE SEQUENCE [LARGE SCALE MRNA]</scope>
    <source>
        <tissue>Lung</tissue>
    </source>
</reference>
<reference key="6">
    <citation type="submission" date="2004-06" db="EMBL/GenBank/DDBJ databases">
        <title>Cloning of human full open reading frames in Gateway(TM) system entry vector (pDONR201).</title>
        <authorList>
            <person name="Ebert L."/>
            <person name="Schick M."/>
            <person name="Neubert P."/>
            <person name="Schatten R."/>
            <person name="Henze S."/>
            <person name="Korn B."/>
        </authorList>
    </citation>
    <scope>NUCLEOTIDE SEQUENCE [LARGE SCALE MRNA]</scope>
</reference>
<reference key="7">
    <citation type="journal article" date="1999" name="Nature">
        <title>The DNA sequence of human chromosome 22.</title>
        <authorList>
            <person name="Dunham I."/>
            <person name="Hunt A.R."/>
            <person name="Collins J.E."/>
            <person name="Bruskiewich R."/>
            <person name="Beare D.M."/>
            <person name="Clamp M."/>
            <person name="Smink L.J."/>
            <person name="Ainscough R."/>
            <person name="Almeida J.P."/>
            <person name="Babbage A.K."/>
            <person name="Bagguley C."/>
            <person name="Bailey J."/>
            <person name="Barlow K.F."/>
            <person name="Bates K.N."/>
            <person name="Beasley O.P."/>
            <person name="Bird C.P."/>
            <person name="Blakey S.E."/>
            <person name="Bridgeman A.M."/>
            <person name="Buck D."/>
            <person name="Burgess J."/>
            <person name="Burrill W.D."/>
            <person name="Burton J."/>
            <person name="Carder C."/>
            <person name="Carter N.P."/>
            <person name="Chen Y."/>
            <person name="Clark G."/>
            <person name="Clegg S.M."/>
            <person name="Cobley V.E."/>
            <person name="Cole C.G."/>
            <person name="Collier R.E."/>
            <person name="Connor R."/>
            <person name="Conroy D."/>
            <person name="Corby N.R."/>
            <person name="Coville G.J."/>
            <person name="Cox A.V."/>
            <person name="Davis J."/>
            <person name="Dawson E."/>
            <person name="Dhami P.D."/>
            <person name="Dockree C."/>
            <person name="Dodsworth S.J."/>
            <person name="Durbin R.M."/>
            <person name="Ellington A.G."/>
            <person name="Evans K.L."/>
            <person name="Fey J.M."/>
            <person name="Fleming K."/>
            <person name="French L."/>
            <person name="Garner A.A."/>
            <person name="Gilbert J.G.R."/>
            <person name="Goward M.E."/>
            <person name="Grafham D.V."/>
            <person name="Griffiths M.N.D."/>
            <person name="Hall C."/>
            <person name="Hall R.E."/>
            <person name="Hall-Tamlyn G."/>
            <person name="Heathcott R.W."/>
            <person name="Ho S."/>
            <person name="Holmes S."/>
            <person name="Hunt S.E."/>
            <person name="Jones M.C."/>
            <person name="Kershaw J."/>
            <person name="Kimberley A.M."/>
            <person name="King A."/>
            <person name="Laird G.K."/>
            <person name="Langford C.F."/>
            <person name="Leversha M.A."/>
            <person name="Lloyd C."/>
            <person name="Lloyd D.M."/>
            <person name="Martyn I.D."/>
            <person name="Mashreghi-Mohammadi M."/>
            <person name="Matthews L.H."/>
            <person name="Mccann O.T."/>
            <person name="Mcclay J."/>
            <person name="Mclaren S."/>
            <person name="McMurray A.A."/>
            <person name="Milne S.A."/>
            <person name="Mortimore B.J."/>
            <person name="Odell C.N."/>
            <person name="Pavitt R."/>
            <person name="Pearce A.V."/>
            <person name="Pearson D."/>
            <person name="Phillimore B.J.C.T."/>
            <person name="Phillips S.H."/>
            <person name="Plumb R.W."/>
            <person name="Ramsay H."/>
            <person name="Ramsey Y."/>
            <person name="Rogers L."/>
            <person name="Ross M.T."/>
            <person name="Scott C.E."/>
            <person name="Sehra H.K."/>
            <person name="Skuce C.D."/>
            <person name="Smalley S."/>
            <person name="Smith M.L."/>
            <person name="Soderlund C."/>
            <person name="Spragon L."/>
            <person name="Steward C.A."/>
            <person name="Sulston J.E."/>
            <person name="Swann R.M."/>
            <person name="Vaudin M."/>
            <person name="Wall M."/>
            <person name="Wallis J.M."/>
            <person name="Whiteley M.N."/>
            <person name="Willey D.L."/>
            <person name="Williams L."/>
            <person name="Williams S.A."/>
            <person name="Williamson H."/>
            <person name="Wilmer T.E."/>
            <person name="Wilming L."/>
            <person name="Wright C.L."/>
            <person name="Hubbard T."/>
            <person name="Bentley D.R."/>
            <person name="Beck S."/>
            <person name="Rogers J."/>
            <person name="Shimizu N."/>
            <person name="Minoshima S."/>
            <person name="Kawasaki K."/>
            <person name="Sasaki T."/>
            <person name="Asakawa S."/>
            <person name="Kudoh J."/>
            <person name="Shintani A."/>
            <person name="Shibuya K."/>
            <person name="Yoshizaki Y."/>
            <person name="Aoki N."/>
            <person name="Mitsuyama S."/>
            <person name="Roe B.A."/>
            <person name="Chen F."/>
            <person name="Chu L."/>
            <person name="Crabtree J."/>
            <person name="Deschamps S."/>
            <person name="Do A."/>
            <person name="Do T."/>
            <person name="Dorman A."/>
            <person name="Fang F."/>
            <person name="Fu Y."/>
            <person name="Hu P."/>
            <person name="Hua A."/>
            <person name="Kenton S."/>
            <person name="Lai H."/>
            <person name="Lao H.I."/>
            <person name="Lewis J."/>
            <person name="Lewis S."/>
            <person name="Lin S.-P."/>
            <person name="Loh P."/>
            <person name="Malaj E."/>
            <person name="Nguyen T."/>
            <person name="Pan H."/>
            <person name="Phan S."/>
            <person name="Qi S."/>
            <person name="Qian Y."/>
            <person name="Ray L."/>
            <person name="Ren Q."/>
            <person name="Shaull S."/>
            <person name="Sloan D."/>
            <person name="Song L."/>
            <person name="Wang Q."/>
            <person name="Wang Y."/>
            <person name="Wang Z."/>
            <person name="White J."/>
            <person name="Willingham D."/>
            <person name="Wu H."/>
            <person name="Yao Z."/>
            <person name="Zhan M."/>
            <person name="Zhang G."/>
            <person name="Chissoe S."/>
            <person name="Murray J."/>
            <person name="Miller N."/>
            <person name="Minx P."/>
            <person name="Fulton R."/>
            <person name="Johnson D."/>
            <person name="Bemis G."/>
            <person name="Bentley D."/>
            <person name="Bradshaw H."/>
            <person name="Bourne S."/>
            <person name="Cordes M."/>
            <person name="Du Z."/>
            <person name="Fulton L."/>
            <person name="Goela D."/>
            <person name="Graves T."/>
            <person name="Hawkins J."/>
            <person name="Hinds K."/>
            <person name="Kemp K."/>
            <person name="Latreille P."/>
            <person name="Layman D."/>
            <person name="Ozersky P."/>
            <person name="Rohlfing T."/>
            <person name="Scheet P."/>
            <person name="Walker C."/>
            <person name="Wamsley A."/>
            <person name="Wohldmann P."/>
            <person name="Pepin K."/>
            <person name="Nelson J."/>
            <person name="Korf I."/>
            <person name="Bedell J.A."/>
            <person name="Hillier L.W."/>
            <person name="Mardis E."/>
            <person name="Waterston R."/>
            <person name="Wilson R."/>
            <person name="Emanuel B.S."/>
            <person name="Shaikh T."/>
            <person name="Kurahashi H."/>
            <person name="Saitta S."/>
            <person name="Budarf M.L."/>
            <person name="McDermid H.E."/>
            <person name="Johnson A."/>
            <person name="Wong A.C.C."/>
            <person name="Morrow B.E."/>
            <person name="Edelmann L."/>
            <person name="Kim U.J."/>
            <person name="Shizuya H."/>
            <person name="Simon M.I."/>
            <person name="Dumanski J.P."/>
            <person name="Peyrard M."/>
            <person name="Kedra D."/>
            <person name="Seroussi E."/>
            <person name="Fransson I."/>
            <person name="Tapia I."/>
            <person name="Bruder C.E."/>
            <person name="O'Brien K.P."/>
            <person name="Wilkinson P."/>
            <person name="Bodenteich A."/>
            <person name="Hartman K."/>
            <person name="Hu X."/>
            <person name="Khan A.S."/>
            <person name="Lane L."/>
            <person name="Tilahun Y."/>
            <person name="Wright H."/>
        </authorList>
    </citation>
    <scope>NUCLEOTIDE SEQUENCE [LARGE SCALE GENOMIC DNA]</scope>
</reference>
<reference key="8">
    <citation type="submission" date="2005-07" db="EMBL/GenBank/DDBJ databases">
        <authorList>
            <person name="Mural R.J."/>
            <person name="Istrail S."/>
            <person name="Sutton G."/>
            <person name="Florea L."/>
            <person name="Halpern A.L."/>
            <person name="Mobarry C.M."/>
            <person name="Lippert R."/>
            <person name="Walenz B."/>
            <person name="Shatkay H."/>
            <person name="Dew I."/>
            <person name="Miller J.R."/>
            <person name="Flanigan M.J."/>
            <person name="Edwards N.J."/>
            <person name="Bolanos R."/>
            <person name="Fasulo D."/>
            <person name="Halldorsson B.V."/>
            <person name="Hannenhalli S."/>
            <person name="Turner R."/>
            <person name="Yooseph S."/>
            <person name="Lu F."/>
            <person name="Nusskern D.R."/>
            <person name="Shue B.C."/>
            <person name="Zheng X.H."/>
            <person name="Zhong F."/>
            <person name="Delcher A.L."/>
            <person name="Huson D.H."/>
            <person name="Kravitz S.A."/>
            <person name="Mouchard L."/>
            <person name="Reinert K."/>
            <person name="Remington K.A."/>
            <person name="Clark A.G."/>
            <person name="Waterman M.S."/>
            <person name="Eichler E.E."/>
            <person name="Adams M.D."/>
            <person name="Hunkapiller M.W."/>
            <person name="Myers E.W."/>
            <person name="Venter J.C."/>
        </authorList>
    </citation>
    <scope>NUCLEOTIDE SEQUENCE [LARGE SCALE GENOMIC DNA]</scope>
</reference>
<reference key="9">
    <citation type="journal article" date="2004" name="Genome Res.">
        <title>The status, quality, and expansion of the NIH full-length cDNA project: the Mammalian Gene Collection (MGC).</title>
        <authorList>
            <consortium name="The MGC Project Team"/>
        </authorList>
    </citation>
    <scope>NUCLEOTIDE SEQUENCE [LARGE SCALE MRNA]</scope>
    <source>
        <tissue>Skin</tissue>
    </source>
</reference>
<reference key="10">
    <citation type="journal article" date="2014" name="Hum. Genet.">
        <title>Identification of a homozygous splice site mutation in the dynein axonemal light chain 4 gene on 22q13.1 in a large consanguineous family from Pakistan with congenital mirror movement disorder.</title>
        <authorList>
            <person name="Ahmed I."/>
            <person name="Mittal K."/>
            <person name="Sheikh T.I."/>
            <person name="Vasli N."/>
            <person name="Rafiq M.A."/>
            <person name="Mikhailov A."/>
            <person name="Ohadi M."/>
            <person name="Mahmood H."/>
            <person name="Rouleau G.A."/>
            <person name="Bhatti A."/>
            <person name="Ayub M."/>
            <person name="Srour M."/>
            <person name="John P."/>
            <person name="Vincent J.B."/>
        </authorList>
    </citation>
    <scope>INVOLVEMENT IN MRMV3</scope>
</reference>
<reference key="11">
    <citation type="journal article" date="2024" name="Mov. Disord.">
        <title>Defining the genetic landscape of congenital mirror movements in 80 affected individuals.</title>
        <authorList>
            <person name="Collins Hutchinson M.L."/>
            <person name="St-Onge J."/>
            <person name="Schlienger S."/>
            <person name="Boudrahem-Addour N."/>
            <person name="Mougharbel L."/>
            <person name="Michaud J.F."/>
            <person name="Lloyd C."/>
            <person name="Bruneau E."/>
            <person name="Roux C."/>
            <person name="Sahly A.N."/>
            <person name="Osterman B."/>
            <person name="Myers K.A."/>
            <person name="Rouleau G.A."/>
            <person name="Jimenez Cruz D.A."/>
            <person name="Riviere J.B."/>
            <person name="Accogli A."/>
            <person name="Charron F."/>
            <person name="Srour M."/>
        </authorList>
    </citation>
    <scope>VARIANT MRMV3 ILE-35</scope>
</reference>
<evidence type="ECO:0000250" key="1"/>
<evidence type="ECO:0000269" key="2">
    <source>
    </source>
</evidence>
<evidence type="ECO:0000269" key="3">
    <source>
    </source>
</evidence>
<evidence type="ECO:0000305" key="4"/>
<name>DNAL4_HUMAN</name>
<gene>
    <name type="primary">DNAL4</name>
</gene>
<sequence>MGETEGKKDEADYKRLQTFPLVRHSDMPEEMRVETMELCVTACEKFSNNNESAAKMIKETMDKKFGSSWHVVIGEGFGFEITHEVKNLLYLYFGGTLAVCVWKCS</sequence>
<organism>
    <name type="scientific">Homo sapiens</name>
    <name type="common">Human</name>
    <dbReference type="NCBI Taxonomy" id="9606"/>
    <lineage>
        <taxon>Eukaryota</taxon>
        <taxon>Metazoa</taxon>
        <taxon>Chordata</taxon>
        <taxon>Craniata</taxon>
        <taxon>Vertebrata</taxon>
        <taxon>Euteleostomi</taxon>
        <taxon>Mammalia</taxon>
        <taxon>Eutheria</taxon>
        <taxon>Euarchontoglires</taxon>
        <taxon>Primates</taxon>
        <taxon>Haplorrhini</taxon>
        <taxon>Catarrhini</taxon>
        <taxon>Hominidae</taxon>
        <taxon>Homo</taxon>
    </lineage>
</organism>
<proteinExistence type="evidence at protein level"/>